<comment type="function">
    <text evidence="3">Reversible hydration of carbon dioxide.</text>
</comment>
<comment type="catalytic activity">
    <reaction evidence="3">
        <text>hydrogencarbonate + H(+) = CO2 + H2O</text>
        <dbReference type="Rhea" id="RHEA:10748"/>
        <dbReference type="ChEBI" id="CHEBI:15377"/>
        <dbReference type="ChEBI" id="CHEBI:15378"/>
        <dbReference type="ChEBI" id="CHEBI:16526"/>
        <dbReference type="ChEBI" id="CHEBI:17544"/>
        <dbReference type="EC" id="4.2.1.1"/>
    </reaction>
</comment>
<comment type="cofactor">
    <cofactor evidence="3">
        <name>Zn(2+)</name>
        <dbReference type="ChEBI" id="CHEBI:29105"/>
    </cofactor>
</comment>
<comment type="activity regulation">
    <text evidence="3">Inhibited by acetazolamide.</text>
</comment>
<comment type="subcellular location">
    <subcellularLocation>
        <location evidence="3">Cytoplasm</location>
    </subcellularLocation>
</comment>
<comment type="PTM">
    <text evidence="4">S-thiolated both by thiol-disulfide exchange with glutathione disulfide and by oxyradical-initiated S-thiolation with reduced glutathione.</text>
</comment>
<comment type="PTM">
    <text evidence="4">S-glutathionylated in hepatocytes under oxidative stress.</text>
</comment>
<comment type="similarity">
    <text evidence="8">Belongs to the alpha-carbonic anhydrase family.</text>
</comment>
<feature type="initiator methionine" description="Removed" evidence="2">
    <location>
        <position position="1"/>
    </location>
</feature>
<feature type="chain" id="PRO_0000077428" description="Carbonic anhydrase 3">
    <location>
        <begin position="2"/>
        <end position="260"/>
    </location>
</feature>
<feature type="domain" description="Alpha-carbonic anhydrase" evidence="6">
    <location>
        <begin position="3"/>
        <end position="259"/>
    </location>
</feature>
<feature type="region of interest" description="Involved in proton transfer" evidence="3">
    <location>
        <begin position="64"/>
        <end position="67"/>
    </location>
</feature>
<feature type="binding site" evidence="3">
    <location>
        <position position="94"/>
    </location>
    <ligand>
        <name>Zn(2+)</name>
        <dbReference type="ChEBI" id="CHEBI:29105"/>
        <note>catalytic</note>
    </ligand>
</feature>
<feature type="binding site" evidence="3">
    <location>
        <position position="96"/>
    </location>
    <ligand>
        <name>Zn(2+)</name>
        <dbReference type="ChEBI" id="CHEBI:29105"/>
        <note>catalytic</note>
    </ligand>
</feature>
<feature type="binding site" evidence="3">
    <location>
        <position position="119"/>
    </location>
    <ligand>
        <name>Zn(2+)</name>
        <dbReference type="ChEBI" id="CHEBI:29105"/>
        <note>catalytic</note>
    </ligand>
</feature>
<feature type="binding site" evidence="1">
    <location>
        <begin position="198"/>
        <end position="199"/>
    </location>
    <ligand>
        <name>substrate</name>
    </ligand>
</feature>
<feature type="modified residue" description="N-acetylalanine" evidence="2">
    <location>
        <position position="2"/>
    </location>
</feature>
<feature type="modified residue" description="Phosphoserine" evidence="4">
    <location>
        <position position="29"/>
    </location>
</feature>
<feature type="modified residue" description="Phosphoserine" evidence="4">
    <location>
        <position position="43"/>
    </location>
</feature>
<feature type="modified residue" description="Phosphoserine" evidence="4">
    <location>
        <position position="50"/>
    </location>
</feature>
<feature type="modified residue" description="Phosphoserine" evidence="4">
    <location>
        <position position="55"/>
    </location>
</feature>
<feature type="modified residue" description="Phosphothreonine" evidence="4">
    <location>
        <position position="73"/>
    </location>
</feature>
<feature type="modified residue" description="Phosphotyrosine" evidence="4">
    <location>
        <position position="127"/>
    </location>
</feature>
<feature type="modified residue" description="Phosphothreonine" evidence="5">
    <location>
        <position position="176"/>
    </location>
</feature>
<feature type="modified residue" description="S-glutathionyl cysteine" evidence="4">
    <location>
        <position position="182"/>
    </location>
</feature>
<feature type="modified residue" description="S-glutathionyl cysteine" evidence="4">
    <location>
        <position position="187"/>
    </location>
</feature>
<feature type="modified residue" description="Phosphothreonine" evidence="4">
    <location>
        <position position="216"/>
    </location>
</feature>
<feature type="modified residue" description="Phosphoserine" evidence="4">
    <location>
        <position position="219"/>
    </location>
</feature>
<accession>Q5S1S4</accession>
<accession>Q0Z809</accession>
<reference key="1">
    <citation type="journal article" date="2006" name="Cytogenet. Genome Res.">
        <title>Molecular characterization and association analysis of porcine CA3.</title>
        <authorList>
            <person name="Wang H.L."/>
            <person name="Zhu Z.M."/>
            <person name="Wang H."/>
            <person name="Yang S.L."/>
            <person name="Zhao S.H."/>
            <person name="Li K."/>
        </authorList>
    </citation>
    <scope>NUCLEOTIDE SEQUENCE [GENOMIC DNA]</scope>
</reference>
<reference key="2">
    <citation type="submission" date="2004-10" db="EMBL/GenBank/DDBJ databases">
        <title>Isolation, prediction of one novel swine gene that is differentially expressed in the longissimus dorsi muscle tissues from landrace large white cross combination.</title>
        <authorList>
            <person name="Liu G.Y."/>
            <person name="Xiong Z.Y."/>
        </authorList>
    </citation>
    <scope>NUCLEOTIDE SEQUENCE [MRNA]</scope>
</reference>
<reference key="3">
    <citation type="submission" date="2004-10" db="EMBL/GenBank/DDBJ databases">
        <title>Characterization of the porcine carbonic anhydrase III (CA3) mRNA.</title>
        <authorList>
            <person name="Wu J."/>
            <person name="Deng C.Y."/>
            <person name="Xiong Y.Z."/>
        </authorList>
    </citation>
    <scope>NUCLEOTIDE SEQUENCE [MRNA]</scope>
    <source>
        <tissue>Skeletal muscle</tissue>
    </source>
</reference>
<reference key="4">
    <citation type="submission" date="2006-06" db="EMBL/GenBank/DDBJ databases">
        <title>Characterization of the porcine carbonic anhydrase III (CA3) gene.</title>
        <authorList>
            <person name="Wu J."/>
            <person name="Deng C.Y."/>
            <person name="Xiong Y.Z."/>
            <person name="Zhou D.H."/>
        </authorList>
    </citation>
    <scope>NUCLEOTIDE SEQUENCE [GENOMIC DNA]</scope>
</reference>
<evidence type="ECO:0000250" key="1">
    <source>
        <dbReference type="UniProtKB" id="P00918"/>
    </source>
</evidence>
<evidence type="ECO:0000250" key="2">
    <source>
        <dbReference type="UniProtKB" id="P07450"/>
    </source>
</evidence>
<evidence type="ECO:0000250" key="3">
    <source>
        <dbReference type="UniProtKB" id="P07451"/>
    </source>
</evidence>
<evidence type="ECO:0000250" key="4">
    <source>
        <dbReference type="UniProtKB" id="P14141"/>
    </source>
</evidence>
<evidence type="ECO:0000250" key="5">
    <source>
        <dbReference type="UniProtKB" id="P16015"/>
    </source>
</evidence>
<evidence type="ECO:0000255" key="6">
    <source>
        <dbReference type="PROSITE-ProRule" id="PRU01134"/>
    </source>
</evidence>
<evidence type="ECO:0000303" key="7">
    <source>
    </source>
</evidence>
<evidence type="ECO:0000305" key="8"/>
<sequence>MAKEWGYADHNGPDHWHELYPIAKGDNQSPIELHTKDIKHDPSLLPWTASYDPGSAKTILNNGKTCRVVFDDTYDRSMLRGGPLTAAYRLRQFHLHWGSSDDHGSEHTVDGVKYAAELHLVHWNSKYNSFATALKHPDGVAVVGIFLKIGREKGEFQLVLDALDKIKTKGKEAPFTNFNPSCLFPACRDYWTYHGSFTTPPCEECIVWLLLKEPITVSSDQMAKLRSLYSSAENEPPVPLVRNWRPPQPIKGRIVKASFK</sequence>
<keyword id="KW-0007">Acetylation</keyword>
<keyword id="KW-0963">Cytoplasm</keyword>
<keyword id="KW-0318">Glutathionylation</keyword>
<keyword id="KW-0456">Lyase</keyword>
<keyword id="KW-0479">Metal-binding</keyword>
<keyword id="KW-0597">Phosphoprotein</keyword>
<keyword id="KW-1185">Reference proteome</keyword>
<keyword id="KW-0862">Zinc</keyword>
<dbReference type="EC" id="4.2.1.1" evidence="3"/>
<dbReference type="EMBL" id="DQ157048">
    <property type="protein sequence ID" value="ABA41599.1"/>
    <property type="molecule type" value="Genomic_DNA"/>
</dbReference>
<dbReference type="EMBL" id="AY789645">
    <property type="protein sequence ID" value="AAV65838.1"/>
    <property type="molecule type" value="mRNA"/>
</dbReference>
<dbReference type="EMBL" id="AY789514">
    <property type="protein sequence ID" value="AAV83540.1"/>
    <property type="molecule type" value="mRNA"/>
</dbReference>
<dbReference type="EMBL" id="DQ675018">
    <property type="protein sequence ID" value="ABG49150.1"/>
    <property type="molecule type" value="Genomic_DNA"/>
</dbReference>
<dbReference type="RefSeq" id="NP_001008688.1">
    <property type="nucleotide sequence ID" value="NM_001008688.1"/>
</dbReference>
<dbReference type="SMR" id="Q5S1S4"/>
<dbReference type="FunCoup" id="Q5S1S4">
    <property type="interactions" value="124"/>
</dbReference>
<dbReference type="STRING" id="9823.ENSSSCP00000053920"/>
<dbReference type="PaxDb" id="9823-ENSSSCP00000006551"/>
<dbReference type="PeptideAtlas" id="Q5S1S4"/>
<dbReference type="Ensembl" id="ENSSSCT00000006734.5">
    <property type="protein sequence ID" value="ENSSSCP00000006551.4"/>
    <property type="gene ID" value="ENSSSCG00000006141.5"/>
</dbReference>
<dbReference type="Ensembl" id="ENSSSCT00070032097.1">
    <property type="protein sequence ID" value="ENSSSCP00070026771.1"/>
    <property type="gene ID" value="ENSSSCG00070016319.1"/>
</dbReference>
<dbReference type="Ensembl" id="ENSSSCT00070032110.1">
    <property type="protein sequence ID" value="ENSSSCP00070026784.1"/>
    <property type="gene ID" value="ENSSSCG00070016319.1"/>
</dbReference>
<dbReference type="Ensembl" id="ENSSSCT00090029177">
    <property type="protein sequence ID" value="ENSSSCP00090018086"/>
    <property type="gene ID" value="ENSSSCG00090016541"/>
</dbReference>
<dbReference type="Ensembl" id="ENSSSCT00105001860">
    <property type="protein sequence ID" value="ENSSSCP00105001337"/>
    <property type="gene ID" value="ENSSSCG00105000991"/>
</dbReference>
<dbReference type="Ensembl" id="ENSSSCT00110001248">
    <property type="protein sequence ID" value="ENSSSCP00110000933"/>
    <property type="gene ID" value="ENSSSCG00110000652"/>
</dbReference>
<dbReference type="Ensembl" id="ENSSSCT00115018786">
    <property type="protein sequence ID" value="ENSSSCP00115017756"/>
    <property type="gene ID" value="ENSSSCG00115010910"/>
</dbReference>
<dbReference type="Ensembl" id="ENSSSCT00130003191">
    <property type="protein sequence ID" value="ENSSSCP00130002301"/>
    <property type="gene ID" value="ENSSSCG00130001657"/>
</dbReference>
<dbReference type="GeneID" id="494016"/>
<dbReference type="KEGG" id="ssc:494016"/>
<dbReference type="CTD" id="761"/>
<dbReference type="VGNC" id="VGNC:86099">
    <property type="gene designation" value="CA3"/>
</dbReference>
<dbReference type="eggNOG" id="KOG0382">
    <property type="taxonomic scope" value="Eukaryota"/>
</dbReference>
<dbReference type="GeneTree" id="ENSGT00940000159435"/>
<dbReference type="HOGENOM" id="CLU_039326_2_1_1"/>
<dbReference type="InParanoid" id="Q5S1S4"/>
<dbReference type="OMA" id="NYPMAKG"/>
<dbReference type="OrthoDB" id="429145at2759"/>
<dbReference type="TreeFam" id="TF316425"/>
<dbReference type="Reactome" id="R-SSC-1475029">
    <property type="pathway name" value="Reversible hydration of carbon dioxide"/>
</dbReference>
<dbReference type="Proteomes" id="UP000008227">
    <property type="component" value="Chromosome 4"/>
</dbReference>
<dbReference type="Proteomes" id="UP000314985">
    <property type="component" value="Chromosome 4"/>
</dbReference>
<dbReference type="Proteomes" id="UP000694570">
    <property type="component" value="Unplaced"/>
</dbReference>
<dbReference type="Proteomes" id="UP000694571">
    <property type="component" value="Unplaced"/>
</dbReference>
<dbReference type="Proteomes" id="UP000694720">
    <property type="component" value="Unplaced"/>
</dbReference>
<dbReference type="Proteomes" id="UP000694722">
    <property type="component" value="Unplaced"/>
</dbReference>
<dbReference type="Proteomes" id="UP000694723">
    <property type="component" value="Unplaced"/>
</dbReference>
<dbReference type="Proteomes" id="UP000694724">
    <property type="component" value="Unplaced"/>
</dbReference>
<dbReference type="Proteomes" id="UP000694725">
    <property type="component" value="Unplaced"/>
</dbReference>
<dbReference type="Proteomes" id="UP000694726">
    <property type="component" value="Unplaced"/>
</dbReference>
<dbReference type="Proteomes" id="UP000694727">
    <property type="component" value="Unplaced"/>
</dbReference>
<dbReference type="Proteomes" id="UP000694728">
    <property type="component" value="Unplaced"/>
</dbReference>
<dbReference type="GO" id="GO:0005829">
    <property type="term" value="C:cytosol"/>
    <property type="evidence" value="ECO:0007669"/>
    <property type="project" value="Ensembl"/>
</dbReference>
<dbReference type="GO" id="GO:0004089">
    <property type="term" value="F:carbonate dehydratase activity"/>
    <property type="evidence" value="ECO:0007669"/>
    <property type="project" value="UniProtKB-EC"/>
</dbReference>
<dbReference type="GO" id="GO:0016151">
    <property type="term" value="F:nickel cation binding"/>
    <property type="evidence" value="ECO:0007669"/>
    <property type="project" value="Ensembl"/>
</dbReference>
<dbReference type="GO" id="GO:0008270">
    <property type="term" value="F:zinc ion binding"/>
    <property type="evidence" value="ECO:0007669"/>
    <property type="project" value="InterPro"/>
</dbReference>
<dbReference type="GO" id="GO:0009617">
    <property type="term" value="P:response to bacterium"/>
    <property type="evidence" value="ECO:0007669"/>
    <property type="project" value="Ensembl"/>
</dbReference>
<dbReference type="CDD" id="cd03119">
    <property type="entry name" value="alpha_CA_I_II_III_XIII"/>
    <property type="match status" value="1"/>
</dbReference>
<dbReference type="FunFam" id="3.10.200.10:FF:000001">
    <property type="entry name" value="Carbonic anhydrase 2"/>
    <property type="match status" value="1"/>
</dbReference>
<dbReference type="Gene3D" id="3.10.200.10">
    <property type="entry name" value="Alpha carbonic anhydrase"/>
    <property type="match status" value="1"/>
</dbReference>
<dbReference type="InterPro" id="IPR001148">
    <property type="entry name" value="CA_dom"/>
</dbReference>
<dbReference type="InterPro" id="IPR036398">
    <property type="entry name" value="CA_dom_sf"/>
</dbReference>
<dbReference type="InterPro" id="IPR023561">
    <property type="entry name" value="Carbonic_anhydrase_a-class"/>
</dbReference>
<dbReference type="InterPro" id="IPR018338">
    <property type="entry name" value="Carbonic_anhydrase_a-class_CS"/>
</dbReference>
<dbReference type="PANTHER" id="PTHR18952">
    <property type="entry name" value="CARBONIC ANHYDRASE"/>
    <property type="match status" value="1"/>
</dbReference>
<dbReference type="PANTHER" id="PTHR18952:SF127">
    <property type="entry name" value="CARBONIC ANHYDRASE 3"/>
    <property type="match status" value="1"/>
</dbReference>
<dbReference type="Pfam" id="PF00194">
    <property type="entry name" value="Carb_anhydrase"/>
    <property type="match status" value="1"/>
</dbReference>
<dbReference type="SMART" id="SM01057">
    <property type="entry name" value="Carb_anhydrase"/>
    <property type="match status" value="1"/>
</dbReference>
<dbReference type="SUPFAM" id="SSF51069">
    <property type="entry name" value="Carbonic anhydrase"/>
    <property type="match status" value="1"/>
</dbReference>
<dbReference type="PROSITE" id="PS00162">
    <property type="entry name" value="ALPHA_CA_1"/>
    <property type="match status" value="1"/>
</dbReference>
<dbReference type="PROSITE" id="PS51144">
    <property type="entry name" value="ALPHA_CA_2"/>
    <property type="match status" value="1"/>
</dbReference>
<proteinExistence type="evidence at transcript level"/>
<protein>
    <recommendedName>
        <fullName>Carbonic anhydrase 3</fullName>
        <ecNumber evidence="3">4.2.1.1</ecNumber>
    </recommendedName>
    <alternativeName>
        <fullName>Carbonate dehydratase III</fullName>
    </alternativeName>
    <alternativeName>
        <fullName>Carbonic anhydrase III</fullName>
        <shortName>CA-III</shortName>
    </alternativeName>
</protein>
<gene>
    <name evidence="7" type="primary">CA3</name>
</gene>
<organism>
    <name type="scientific">Sus scrofa</name>
    <name type="common">Pig</name>
    <dbReference type="NCBI Taxonomy" id="9823"/>
    <lineage>
        <taxon>Eukaryota</taxon>
        <taxon>Metazoa</taxon>
        <taxon>Chordata</taxon>
        <taxon>Craniata</taxon>
        <taxon>Vertebrata</taxon>
        <taxon>Euteleostomi</taxon>
        <taxon>Mammalia</taxon>
        <taxon>Eutheria</taxon>
        <taxon>Laurasiatheria</taxon>
        <taxon>Artiodactyla</taxon>
        <taxon>Suina</taxon>
        <taxon>Suidae</taxon>
        <taxon>Sus</taxon>
    </lineage>
</organism>
<name>CAH3_PIG</name>